<organismHost>
    <name type="scientific">Cercopithecidae</name>
    <name type="common">Old World monkeys</name>
    <dbReference type="NCBI Taxonomy" id="9527"/>
</organismHost>
<protein>
    <recommendedName>
        <fullName>Gag polyprotein</fullName>
    </recommendedName>
    <alternativeName>
        <fullName>Pr55Gag</fullName>
    </alternativeName>
    <component>
        <recommendedName>
            <fullName>Matrix protein p17</fullName>
            <shortName>MA</shortName>
        </recommendedName>
    </component>
    <component>
        <recommendedName>
            <fullName>Capsid protein p24</fullName>
            <shortName>CA</shortName>
        </recommendedName>
    </component>
    <component>
        <recommendedName>
            <fullName>Spacer peptide p2</fullName>
        </recommendedName>
    </component>
    <component>
        <recommendedName>
            <fullName>Nucleocapsid protein p7</fullName>
            <shortName>NC</shortName>
        </recommendedName>
    </component>
    <component>
        <recommendedName>
            <fullName>Spacer peptide p1</fullName>
        </recommendedName>
    </component>
    <component>
        <recommendedName>
            <fullName>p6-gag</fullName>
        </recommendedName>
    </component>
</protein>
<accession>P12496</accession>
<gene>
    <name type="primary">gag</name>
</gene>
<dbReference type="EMBL" id="X14307">
    <property type="protein sequence ID" value="CAA32483.1"/>
    <property type="molecule type" value="Genomic_DNA"/>
</dbReference>
<dbReference type="PIR" id="S04237">
    <property type="entry name" value="S04237"/>
</dbReference>
<dbReference type="BMRB" id="P12496"/>
<dbReference type="SMR" id="P12496"/>
<dbReference type="PRO" id="PR:P12496"/>
<dbReference type="Proteomes" id="UP000008173">
    <property type="component" value="Segment"/>
</dbReference>
<dbReference type="GO" id="GO:0030430">
    <property type="term" value="C:host cell cytoplasm"/>
    <property type="evidence" value="ECO:0007669"/>
    <property type="project" value="UniProtKB-SubCell"/>
</dbReference>
<dbReference type="GO" id="GO:0042025">
    <property type="term" value="C:host cell nucleus"/>
    <property type="evidence" value="ECO:0007669"/>
    <property type="project" value="UniProtKB-SubCell"/>
</dbReference>
<dbReference type="GO" id="GO:0020002">
    <property type="term" value="C:host cell plasma membrane"/>
    <property type="evidence" value="ECO:0007669"/>
    <property type="project" value="UniProtKB-SubCell"/>
</dbReference>
<dbReference type="GO" id="GO:0016020">
    <property type="term" value="C:membrane"/>
    <property type="evidence" value="ECO:0007669"/>
    <property type="project" value="UniProtKB-KW"/>
</dbReference>
<dbReference type="GO" id="GO:0019013">
    <property type="term" value="C:viral nucleocapsid"/>
    <property type="evidence" value="ECO:0007669"/>
    <property type="project" value="UniProtKB-KW"/>
</dbReference>
<dbReference type="GO" id="GO:0003723">
    <property type="term" value="F:RNA binding"/>
    <property type="evidence" value="ECO:0007669"/>
    <property type="project" value="UniProtKB-KW"/>
</dbReference>
<dbReference type="GO" id="GO:0005198">
    <property type="term" value="F:structural molecule activity"/>
    <property type="evidence" value="ECO:0007669"/>
    <property type="project" value="InterPro"/>
</dbReference>
<dbReference type="GO" id="GO:0008270">
    <property type="term" value="F:zinc ion binding"/>
    <property type="evidence" value="ECO:0007669"/>
    <property type="project" value="UniProtKB-KW"/>
</dbReference>
<dbReference type="GO" id="GO:0039702">
    <property type="term" value="P:viral budding via host ESCRT complex"/>
    <property type="evidence" value="ECO:0007669"/>
    <property type="project" value="UniProtKB-KW"/>
</dbReference>
<dbReference type="GO" id="GO:0075523">
    <property type="term" value="P:viral translational frameshifting"/>
    <property type="evidence" value="ECO:0007669"/>
    <property type="project" value="UniProtKB-KW"/>
</dbReference>
<dbReference type="Gene3D" id="1.10.1200.30">
    <property type="match status" value="1"/>
</dbReference>
<dbReference type="Gene3D" id="1.10.375.10">
    <property type="entry name" value="Human Immunodeficiency Virus Type 1 Capsid Protein"/>
    <property type="match status" value="1"/>
</dbReference>
<dbReference type="Gene3D" id="1.10.150.90">
    <property type="entry name" value="Immunodeficiency lentiviruses, gag gene matrix protein p17"/>
    <property type="match status" value="1"/>
</dbReference>
<dbReference type="Gene3D" id="1.20.5.760">
    <property type="entry name" value="Single helix bin"/>
    <property type="match status" value="1"/>
</dbReference>
<dbReference type="Gene3D" id="4.10.60.10">
    <property type="entry name" value="Zinc finger, CCHC-type"/>
    <property type="match status" value="1"/>
</dbReference>
<dbReference type="InterPro" id="IPR045345">
    <property type="entry name" value="Gag_p24_C"/>
</dbReference>
<dbReference type="InterPro" id="IPR000071">
    <property type="entry name" value="Lentvrl_matrix_N"/>
</dbReference>
<dbReference type="InterPro" id="IPR012344">
    <property type="entry name" value="Matrix_HIV/RSV_N"/>
</dbReference>
<dbReference type="InterPro" id="IPR050195">
    <property type="entry name" value="Primate_lentivir_Gag_pol-like"/>
</dbReference>
<dbReference type="InterPro" id="IPR008916">
    <property type="entry name" value="Retrov_capsid_C"/>
</dbReference>
<dbReference type="InterPro" id="IPR008919">
    <property type="entry name" value="Retrov_capsid_N"/>
</dbReference>
<dbReference type="InterPro" id="IPR010999">
    <property type="entry name" value="Retrovr_matrix"/>
</dbReference>
<dbReference type="InterPro" id="IPR001878">
    <property type="entry name" value="Znf_CCHC"/>
</dbReference>
<dbReference type="InterPro" id="IPR036875">
    <property type="entry name" value="Znf_CCHC_sf"/>
</dbReference>
<dbReference type="PANTHER" id="PTHR40389:SF4">
    <property type="match status" value="1"/>
</dbReference>
<dbReference type="PANTHER" id="PTHR40389">
    <property type="entry name" value="ENDOGENOUS RETROVIRUS GROUP K MEMBER 24 GAG POLYPROTEIN-RELATED"/>
    <property type="match status" value="1"/>
</dbReference>
<dbReference type="Pfam" id="PF00540">
    <property type="entry name" value="Gag_p17"/>
    <property type="match status" value="1"/>
</dbReference>
<dbReference type="Pfam" id="PF00607">
    <property type="entry name" value="Gag_p24"/>
    <property type="match status" value="1"/>
</dbReference>
<dbReference type="Pfam" id="PF19317">
    <property type="entry name" value="Gag_p24_C"/>
    <property type="match status" value="1"/>
</dbReference>
<dbReference type="Pfam" id="PF00098">
    <property type="entry name" value="zf-CCHC"/>
    <property type="match status" value="2"/>
</dbReference>
<dbReference type="PRINTS" id="PR00234">
    <property type="entry name" value="HIV1MATRIX"/>
</dbReference>
<dbReference type="SMART" id="SM00343">
    <property type="entry name" value="ZnF_C2HC"/>
    <property type="match status" value="2"/>
</dbReference>
<dbReference type="SUPFAM" id="SSF47836">
    <property type="entry name" value="Retroviral matrix proteins"/>
    <property type="match status" value="1"/>
</dbReference>
<dbReference type="SUPFAM" id="SSF47353">
    <property type="entry name" value="Retrovirus capsid dimerization domain-like"/>
    <property type="match status" value="1"/>
</dbReference>
<dbReference type="SUPFAM" id="SSF47943">
    <property type="entry name" value="Retrovirus capsid protein, N-terminal core domain"/>
    <property type="match status" value="1"/>
</dbReference>
<dbReference type="SUPFAM" id="SSF57756">
    <property type="entry name" value="Retrovirus zinc finger-like domains"/>
    <property type="match status" value="1"/>
</dbReference>
<dbReference type="PROSITE" id="PS50158">
    <property type="entry name" value="ZF_CCHC"/>
    <property type="match status" value="2"/>
</dbReference>
<feature type="initiator methionine" description="Removed; by host" evidence="1">
    <location>
        <position position="1"/>
    </location>
</feature>
<feature type="chain" id="PRO_0000316140" description="Gag polyprotein" evidence="1">
    <location>
        <begin position="2"/>
        <end position="507"/>
    </location>
</feature>
<feature type="chain" id="PRO_0000038640" description="Matrix protein p17" evidence="1">
    <location>
        <begin position="2"/>
        <end position="135"/>
    </location>
</feature>
<feature type="chain" id="PRO_0000038641" description="Capsid protein p24" evidence="1">
    <location>
        <begin position="136"/>
        <end position="365"/>
    </location>
</feature>
<feature type="peptide" id="PRO_0000316141" description="Spacer peptide p2" evidence="1">
    <location>
        <begin position="366"/>
        <end position="380"/>
    </location>
</feature>
<feature type="chain" id="PRO_0000316142" description="Nucleocapsid protein p7" evidence="1">
    <location>
        <begin position="381"/>
        <end position="434"/>
    </location>
</feature>
<feature type="peptide" id="PRO_0000316143" description="Spacer peptide p1" evidence="1">
    <location>
        <begin position="435"/>
        <end position="448"/>
    </location>
</feature>
<feature type="chain" id="PRO_0000316144" description="p6-gag" evidence="1">
    <location>
        <begin position="449"/>
        <end position="507"/>
    </location>
</feature>
<feature type="zinc finger region" description="CCHC-type 1" evidence="5">
    <location>
        <begin position="392"/>
        <end position="409"/>
    </location>
</feature>
<feature type="zinc finger region" description="CCHC-type 2" evidence="5">
    <location>
        <begin position="413"/>
        <end position="430"/>
    </location>
</feature>
<feature type="region of interest" description="Disordered" evidence="6">
    <location>
        <begin position="215"/>
        <end position="237"/>
    </location>
</feature>
<feature type="region of interest" description="Interaction with host ALIX" evidence="3">
    <location>
        <begin position="486"/>
        <end position="499"/>
    </location>
</feature>
<feature type="short sequence motif" description="Nuclear export signal" evidence="1">
    <location>
        <begin position="16"/>
        <end position="22"/>
    </location>
</feature>
<feature type="short sequence motif" description="Nuclear localization signal" evidence="1">
    <location>
        <begin position="26"/>
        <end position="32"/>
    </location>
</feature>
<feature type="short sequence motif" description="PTAP/PSAP motif" evidence="3">
    <location>
        <begin position="459"/>
        <end position="462"/>
    </location>
</feature>
<feature type="site" description="Cleavage; by viral protease" evidence="1">
    <location>
        <begin position="135"/>
        <end position="136"/>
    </location>
</feature>
<feature type="site" description="Cleavage; by viral protease" evidence="1">
    <location>
        <begin position="448"/>
        <end position="449"/>
    </location>
</feature>
<feature type="lipid moiety-binding region" description="N-myristoyl glycine; by host" evidence="1">
    <location>
        <position position="2"/>
    </location>
</feature>
<sequence>MGARNSVLSGKEADELEKVRLRPNGKKKYMLKHVVWAANELDRFGLAESLLDNKEGCQKILSVLAPLVPTGSENLKSLYNTVCVIWCIHAEEKVKHTEEAKQIVQRHLVVETGTADRMPATSRPTAPPSGRGGNYPVQQVGGNYVHLPLSPRTLNAWVKLVEEKKFGAEVVPGFQALSEGCTPYDINQMLNCVGEHQAAMQIIREIINEEAADWDLQHPQPGPLPAGQLREPRGSDIAGTTSTVDEQIQWMYRQQNPIPVGNIYRRWIQLGLQKCVRMYNPTNILDVKQGPKEPFQSYVDRFYKSLRAEQTDPAVKNWMTQTLLIQNANPDCKLVLKGLGMNPTLEEMLTACQGVGGPGQKARLMAEALKEALRPDQLPFAAVQQKGQRKTIKCWNCGKEGHSAKQCRAPRRQGCWKCGKTGHVMAKCPERQAGFLGLGPWGKKPRNFPMAQMPQGLIPTAPPEDPAVDLLKNYMKMGRKQRENRERPYKEVTEDLLHLNSLFGEDQ</sequence>
<reference key="1">
    <citation type="journal article" date="1989" name="Nature">
        <title>An African primate lentivirus (SIVsm) closely related to HIV-2.</title>
        <authorList>
            <person name="Hirsch V.M."/>
            <person name="Olmstead R.A."/>
            <person name="Murphey-Corb M."/>
            <person name="Purcell R.H."/>
            <person name="Johnson P.R."/>
        </authorList>
    </citation>
    <scope>NUCLEOTIDE SEQUENCE [GENOMIC DNA]</scope>
</reference>
<comment type="function">
    <text evidence="1">Matrix protein p17 targets Gag and Gag-Pol polyproteins to the plasma membrane via a multipartite membrane binding signal, that includes its myristoylated N-terminus. Also mediates nuclear localization of the preintegration complex. Implicated in the release from host cell mediated by Vpu (By similarity).</text>
</comment>
<comment type="function">
    <text evidence="1">Capsid protein p24 forms the conical core of the virus that encapsulates the genomic RNA-nucleocapsid complex.</text>
</comment>
<comment type="function">
    <text evidence="1">Nucleocapsid protein p7 encapsulates and protects viral dimeric unspliced (genomic) RNA. Binds these RNAs through its zinc fingers (By similarity).</text>
</comment>
<comment type="function">
    <text evidence="1">p6-gag plays a role in budding of the assembled particle by interacting with the host class E VPS proteins TSG101 and PDCD6IP/AIP1.</text>
</comment>
<comment type="subunit">
    <molecule>Matrix protein p17</molecule>
    <text evidence="2 4">Homotrimer. Interacts with gp41 (via C-terminus).</text>
</comment>
<comment type="subunit">
    <molecule>p6-gag</molecule>
    <text evidence="4">Interacts with host TSG101 (By similarity).</text>
</comment>
<comment type="subcellular location">
    <molecule>Matrix protein p17</molecule>
    <subcellularLocation>
        <location evidence="7">Virion</location>
    </subcellularLocation>
    <subcellularLocation>
        <location evidence="1">Host nucleus</location>
    </subcellularLocation>
    <subcellularLocation>
        <location evidence="1">Host cytoplasm</location>
    </subcellularLocation>
    <subcellularLocation>
        <location evidence="7">Host cell membrane</location>
        <topology evidence="7">Lipid-anchor</topology>
    </subcellularLocation>
    <text evidence="1">Following virus entry, the nuclear localization signal (NLS) of the matrix protein participates with Vpr to the nuclear localization of the viral genome. During virus production, the nuclear export activity of the matrix protein counteracts the NLS to maintain the Gag and Gag-Pol polyproteins in the cytoplasm, thereby directing unspliced RNA to the plasma membrane (By similarity).</text>
</comment>
<comment type="subcellular location">
    <molecule>Capsid protein p24</molecule>
    <subcellularLocation>
        <location evidence="7">Virion</location>
    </subcellularLocation>
</comment>
<comment type="subcellular location">
    <molecule>Nucleocapsid protein p7</molecule>
    <subcellularLocation>
        <location evidence="7">Virion</location>
    </subcellularLocation>
</comment>
<comment type="alternative products">
    <event type="ribosomal frameshifting"/>
    <isoform>
        <id>P12496-1</id>
        <name>Gag polyprotein</name>
        <sequence type="displayed"/>
    </isoform>
    <isoform>
        <id>P12502-1</id>
        <name>Gag-Pol polyprotein</name>
        <sequence type="external"/>
    </isoform>
    <text>Translation results in the formation of the Gag polyprotein most of the time. Ribosomal frameshifting at the gag-pol genes boundary occurs at low frequency and produces the Gag-Pol polyprotein. This strategy of translation probably allows the virus to modulate the quantity of each viral protein. Maintenance of a correct Gag to Gag-Pol ratio is essential for RNA dimerization and viral infectivity.</text>
</comment>
<comment type="domain">
    <text evidence="3">Late-budding domains (L domains) are short sequence motifs essential for viral particle budding. They recruit proteins of the host ESCRT machinery (Endosomal Sorting Complex Required for Transport) or ESCRT-associated proteins. p6-gag contains two L domains: a PTAP/PSAP motif, which interacts with the UEV domain of TSG101 and an ALIX binding motif.</text>
</comment>
<comment type="PTM">
    <text evidence="1">Capsid protein p24 is phosphorylated.</text>
</comment>
<comment type="PTM">
    <text evidence="1">Specific enzymatic cleavages by the viral protease yield mature proteins. The polyprotein is cleaved during and after budding, this process is termed maturation (By similarity).</text>
</comment>
<comment type="miscellaneous">
    <molecule>Isoform Gag polyprotein</molecule>
    <text>Produced by conventional translation.</text>
</comment>
<comment type="similarity">
    <text evidence="7">Belongs to the primate lentivirus group gag polyprotein family.</text>
</comment>
<organism>
    <name type="scientific">Simian immunodeficiency virus (isolate F236/smH4)</name>
    <name type="common">SIV-sm</name>
    <name type="synonym">Simian immunodeficiency virus sooty mangabey monkey</name>
    <dbReference type="NCBI Taxonomy" id="11737"/>
    <lineage>
        <taxon>Viruses</taxon>
        <taxon>Riboviria</taxon>
        <taxon>Pararnavirae</taxon>
        <taxon>Artverviricota</taxon>
        <taxon>Revtraviricetes</taxon>
        <taxon>Ortervirales</taxon>
        <taxon>Retroviridae</taxon>
        <taxon>Orthoretrovirinae</taxon>
        <taxon>Lentivirus</taxon>
        <taxon>Simian immunodeficiency virus</taxon>
    </lineage>
</organism>
<proteinExistence type="inferred from homology"/>
<keyword id="KW-0167">Capsid protein</keyword>
<keyword id="KW-1032">Host cell membrane</keyword>
<keyword id="KW-1035">Host cytoplasm</keyword>
<keyword id="KW-1043">Host membrane</keyword>
<keyword id="KW-1048">Host nucleus</keyword>
<keyword id="KW-0945">Host-virus interaction</keyword>
<keyword id="KW-0449">Lipoprotein</keyword>
<keyword id="KW-0472">Membrane</keyword>
<keyword id="KW-0479">Metal-binding</keyword>
<keyword id="KW-0519">Myristate</keyword>
<keyword id="KW-0597">Phosphoprotein</keyword>
<keyword id="KW-0677">Repeat</keyword>
<keyword id="KW-0688">Ribosomal frameshifting</keyword>
<keyword id="KW-0694">RNA-binding</keyword>
<keyword id="KW-1198">Viral budding</keyword>
<keyword id="KW-1187">Viral budding via the host ESCRT complexes</keyword>
<keyword id="KW-0543">Viral nucleoprotein</keyword>
<keyword id="KW-1188">Viral release from host cell</keyword>
<keyword id="KW-0946">Virion</keyword>
<keyword id="KW-0862">Zinc</keyword>
<keyword id="KW-0863">Zinc-finger</keyword>
<evidence type="ECO:0000250" key="1"/>
<evidence type="ECO:0000250" key="2">
    <source>
        <dbReference type="UniProtKB" id="P04591"/>
    </source>
</evidence>
<evidence type="ECO:0000250" key="3">
    <source>
        <dbReference type="UniProtKB" id="P05893"/>
    </source>
</evidence>
<evidence type="ECO:0000250" key="4">
    <source>
        <dbReference type="UniProtKB" id="P12493"/>
    </source>
</evidence>
<evidence type="ECO:0000255" key="5">
    <source>
        <dbReference type="PROSITE-ProRule" id="PRU00047"/>
    </source>
</evidence>
<evidence type="ECO:0000256" key="6">
    <source>
        <dbReference type="SAM" id="MobiDB-lite"/>
    </source>
</evidence>
<evidence type="ECO:0000305" key="7"/>
<name>GAG_SIVS4</name>